<accession>Q8PV48</accession>
<dbReference type="EMBL" id="AE008384">
    <property type="protein sequence ID" value="AAM31822.1"/>
    <property type="molecule type" value="Genomic_DNA"/>
</dbReference>
<dbReference type="RefSeq" id="WP_011034057.1">
    <property type="nucleotide sequence ID" value="NC_003901.1"/>
</dbReference>
<dbReference type="SMR" id="Q8PV48"/>
<dbReference type="KEGG" id="mma:MM_2126"/>
<dbReference type="PATRIC" id="fig|192952.21.peg.2440"/>
<dbReference type="eggNOG" id="arCOG04072">
    <property type="taxonomic scope" value="Archaea"/>
</dbReference>
<dbReference type="HOGENOM" id="CLU_037562_4_2_2"/>
<dbReference type="Proteomes" id="UP000000595">
    <property type="component" value="Chromosome"/>
</dbReference>
<dbReference type="GO" id="GO:1990904">
    <property type="term" value="C:ribonucleoprotein complex"/>
    <property type="evidence" value="ECO:0007669"/>
    <property type="project" value="UniProtKB-KW"/>
</dbReference>
<dbReference type="GO" id="GO:0005840">
    <property type="term" value="C:ribosome"/>
    <property type="evidence" value="ECO:0007669"/>
    <property type="project" value="UniProtKB-KW"/>
</dbReference>
<dbReference type="GO" id="GO:0019843">
    <property type="term" value="F:rRNA binding"/>
    <property type="evidence" value="ECO:0007669"/>
    <property type="project" value="UniProtKB-UniRule"/>
</dbReference>
<dbReference type="GO" id="GO:0003735">
    <property type="term" value="F:structural constituent of ribosome"/>
    <property type="evidence" value="ECO:0007669"/>
    <property type="project" value="InterPro"/>
</dbReference>
<dbReference type="GO" id="GO:0006412">
    <property type="term" value="P:translation"/>
    <property type="evidence" value="ECO:0007669"/>
    <property type="project" value="UniProtKB-UniRule"/>
</dbReference>
<dbReference type="FunFam" id="3.30.70.330:FF:000532">
    <property type="entry name" value="50S ribosomal protein L23"/>
    <property type="match status" value="1"/>
</dbReference>
<dbReference type="Gene3D" id="3.30.70.330">
    <property type="match status" value="1"/>
</dbReference>
<dbReference type="HAMAP" id="MF_01369_A">
    <property type="entry name" value="Ribosomal_uL23_A"/>
    <property type="match status" value="1"/>
</dbReference>
<dbReference type="InterPro" id="IPR012677">
    <property type="entry name" value="Nucleotide-bd_a/b_plait_sf"/>
</dbReference>
<dbReference type="InterPro" id="IPR019985">
    <property type="entry name" value="Ribosomal_uL23"/>
</dbReference>
<dbReference type="InterPro" id="IPR013025">
    <property type="entry name" value="Ribosomal_uL23-like"/>
</dbReference>
<dbReference type="InterPro" id="IPR012678">
    <property type="entry name" value="Ribosomal_uL23/eL15/eS24_sf"/>
</dbReference>
<dbReference type="NCBIfam" id="NF011118">
    <property type="entry name" value="PRK14548.1"/>
    <property type="match status" value="1"/>
</dbReference>
<dbReference type="NCBIfam" id="TIGR03636">
    <property type="entry name" value="uL23_arch"/>
    <property type="match status" value="1"/>
</dbReference>
<dbReference type="PANTHER" id="PTHR11620">
    <property type="entry name" value="60S RIBOSOMAL PROTEIN L23A"/>
    <property type="match status" value="1"/>
</dbReference>
<dbReference type="Pfam" id="PF00276">
    <property type="entry name" value="Ribosomal_L23"/>
    <property type="match status" value="1"/>
</dbReference>
<dbReference type="SUPFAM" id="SSF54189">
    <property type="entry name" value="Ribosomal proteins S24e, L23 and L15e"/>
    <property type="match status" value="1"/>
</dbReference>
<name>RL23_METMA</name>
<keyword id="KW-0687">Ribonucleoprotein</keyword>
<keyword id="KW-0689">Ribosomal protein</keyword>
<keyword id="KW-0694">RNA-binding</keyword>
<keyword id="KW-0699">rRNA-binding</keyword>
<evidence type="ECO:0000255" key="1">
    <source>
        <dbReference type="HAMAP-Rule" id="MF_01369"/>
    </source>
</evidence>
<evidence type="ECO:0000305" key="2"/>
<proteinExistence type="inferred from homology"/>
<comment type="function">
    <text evidence="1">Binds to 23S rRNA. One of the proteins that surrounds the polypeptide exit tunnel on the outside of the ribosome.</text>
</comment>
<comment type="subunit">
    <text evidence="1">Part of the 50S ribosomal subunit. Contacts protein L29.</text>
</comment>
<comment type="similarity">
    <text evidence="1">Belongs to the universal ribosomal protein uL23 family.</text>
</comment>
<organism>
    <name type="scientific">Methanosarcina mazei (strain ATCC BAA-159 / DSM 3647 / Goe1 / Go1 / JCM 11833 / OCM 88)</name>
    <name type="common">Methanosarcina frisia</name>
    <dbReference type="NCBI Taxonomy" id="192952"/>
    <lineage>
        <taxon>Archaea</taxon>
        <taxon>Methanobacteriati</taxon>
        <taxon>Methanobacteriota</taxon>
        <taxon>Stenosarchaea group</taxon>
        <taxon>Methanomicrobia</taxon>
        <taxon>Methanosarcinales</taxon>
        <taxon>Methanosarcinaceae</taxon>
        <taxon>Methanosarcina</taxon>
    </lineage>
</organism>
<feature type="chain" id="PRO_0000272946" description="Large ribosomal subunit protein uL23">
    <location>
        <begin position="1"/>
        <end position="82"/>
    </location>
</feature>
<reference key="1">
    <citation type="journal article" date="2002" name="J. Mol. Microbiol. Biotechnol.">
        <title>The genome of Methanosarcina mazei: evidence for lateral gene transfer between Bacteria and Archaea.</title>
        <authorList>
            <person name="Deppenmeier U."/>
            <person name="Johann A."/>
            <person name="Hartsch T."/>
            <person name="Merkl R."/>
            <person name="Schmitz R.A."/>
            <person name="Martinez-Arias R."/>
            <person name="Henne A."/>
            <person name="Wiezer A."/>
            <person name="Baeumer S."/>
            <person name="Jacobi C."/>
            <person name="Brueggemann H."/>
            <person name="Lienard T."/>
            <person name="Christmann A."/>
            <person name="Boemecke M."/>
            <person name="Steckel S."/>
            <person name="Bhattacharyya A."/>
            <person name="Lykidis A."/>
            <person name="Overbeek R."/>
            <person name="Klenk H.-P."/>
            <person name="Gunsalus R.P."/>
            <person name="Fritz H.-J."/>
            <person name="Gottschalk G."/>
        </authorList>
    </citation>
    <scope>NUCLEOTIDE SEQUENCE [LARGE SCALE GENOMIC DNA]</scope>
    <source>
        <strain>ATCC BAA-159 / DSM 3647 / Goe1 / Go1 / JCM 11833 / OCM 88</strain>
    </source>
</reference>
<gene>
    <name evidence="1" type="primary">rpl23</name>
    <name type="ordered locus">MM_2126</name>
</gene>
<protein>
    <recommendedName>
        <fullName evidence="1">Large ribosomal subunit protein uL23</fullName>
    </recommendedName>
    <alternativeName>
        <fullName evidence="2">50S ribosomal protein L23</fullName>
    </alternativeName>
</protein>
<sequence length="82" mass="9355">MSSINYPFVTEKAMMLLDENKLQFIVDTRSNKKQIVEDVEKLYGFKVKAVRTMTTMKGTKKAVLAFEEPEAAHEIATRIGLM</sequence>